<name>CREL2_CRIGR</name>
<organism>
    <name type="scientific">Cricetulus griseus</name>
    <name type="common">Chinese hamster</name>
    <name type="synonym">Cricetulus barabensis griseus</name>
    <dbReference type="NCBI Taxonomy" id="10029"/>
    <lineage>
        <taxon>Eukaryota</taxon>
        <taxon>Metazoa</taxon>
        <taxon>Chordata</taxon>
        <taxon>Craniata</taxon>
        <taxon>Vertebrata</taxon>
        <taxon>Euteleostomi</taxon>
        <taxon>Mammalia</taxon>
        <taxon>Eutheria</taxon>
        <taxon>Euarchontoglires</taxon>
        <taxon>Glires</taxon>
        <taxon>Rodentia</taxon>
        <taxon>Myomorpha</taxon>
        <taxon>Muroidea</taxon>
        <taxon>Cricetidae</taxon>
        <taxon>Cricetinae</taxon>
        <taxon>Cricetulus</taxon>
    </lineage>
</organism>
<protein>
    <recommendedName>
        <fullName evidence="5">Protein disulfide isomerase CRELD2</fullName>
        <ecNumber evidence="2">5.3.4.1</ecNumber>
    </recommendedName>
    <alternativeName>
        <fullName evidence="5">Cysteine-rich with EGF-like domain protein 2</fullName>
    </alternativeName>
    <alternativeName>
        <fullName>Protein HT</fullName>
    </alternativeName>
</protein>
<sequence>MHLPPAAAVGLLLLLLPPPARVASRKPTMCQRCRALVDKFNQGMANTARKNFGGGNTAWEEKSLSKYEFSEIRLLEIMEGLCDSNDFECNQLLEQHEEQLEAWWQTLKKECPNLFEWFCVHTLKACCLPGTYGPDCQECQGGSQRPCSGNGHCDGDGSRQGDGSCQCHVGYKGPLCIDCMDGYFSLLRNETHSFCTACDESCKTCSGPTNKGCVECEVGWTRVEDACVDVDECAAETPPCSNVQYCENVNGSYTCEECDSTCVGCTGKGPANCKECISGYSKQKGECADIDECSLETKVCKKENENCYNTPGSFVCVCPEGFEEDRRCLCTDSRRRSGRGKSHTATLP</sequence>
<accession>Q60438</accession>
<feature type="signal peptide" evidence="3">
    <location>
        <begin position="1"/>
        <end position="22"/>
    </location>
</feature>
<feature type="chain" id="PRO_0000256245" description="Protein disulfide isomerase CRELD2">
    <location>
        <begin position="23"/>
        <end position="348"/>
    </location>
</feature>
<feature type="domain" description="EGF-like 1" evidence="4">
    <location>
        <begin position="135"/>
        <end position="177"/>
    </location>
</feature>
<feature type="repeat" description="FU 1">
    <location>
        <begin position="192"/>
        <end position="239"/>
    </location>
</feature>
<feature type="repeat" description="FU 2">
    <location>
        <begin position="252"/>
        <end position="299"/>
    </location>
</feature>
<feature type="domain" description="EGF-like 2; calcium-binding" evidence="4">
    <location>
        <begin position="289"/>
        <end position="329"/>
    </location>
</feature>
<feature type="short sequence motif" description="CXXC" evidence="2">
    <location>
        <begin position="30"/>
        <end position="33"/>
    </location>
</feature>
<feature type="short sequence motif" description="CXXC" evidence="2">
    <location>
        <begin position="262"/>
        <end position="265"/>
    </location>
</feature>
<feature type="glycosylation site" description="N-linked (GlcNAc...) asparagine" evidence="3">
    <location>
        <position position="250"/>
    </location>
</feature>
<feature type="disulfide bond" description="Redox-active" evidence="2">
    <location>
        <begin position="30"/>
        <end position="33"/>
    </location>
</feature>
<feature type="disulfide bond" evidence="4">
    <location>
        <begin position="139"/>
        <end position="153"/>
    </location>
</feature>
<feature type="disulfide bond" evidence="4">
    <location>
        <begin position="147"/>
        <end position="165"/>
    </location>
</feature>
<feature type="disulfide bond" evidence="4">
    <location>
        <begin position="167"/>
        <end position="176"/>
    </location>
</feature>
<feature type="disulfide bond" description="Redox-active" evidence="2">
    <location>
        <begin position="262"/>
        <end position="265"/>
    </location>
</feature>
<feature type="disulfide bond" evidence="4">
    <location>
        <begin position="293"/>
        <end position="307"/>
    </location>
</feature>
<feature type="disulfide bond" evidence="4">
    <location>
        <begin position="300"/>
        <end position="316"/>
    </location>
</feature>
<feature type="disulfide bond" evidence="4">
    <location>
        <begin position="318"/>
        <end position="328"/>
    </location>
</feature>
<evidence type="ECO:0000250" key="1">
    <source>
        <dbReference type="UniProtKB" id="Q6UXH1"/>
    </source>
</evidence>
<evidence type="ECO:0000250" key="2">
    <source>
        <dbReference type="UniProtKB" id="Q9CYA0"/>
    </source>
</evidence>
<evidence type="ECO:0000255" key="3"/>
<evidence type="ECO:0000255" key="4">
    <source>
        <dbReference type="PROSITE-ProRule" id="PRU00076"/>
    </source>
</evidence>
<evidence type="ECO:0000305" key="5"/>
<proteinExistence type="evidence at transcript level"/>
<reference key="1">
    <citation type="submission" date="1996-02" db="EMBL/GenBank/DDBJ databases">
        <authorList>
            <person name="Chen H."/>
            <person name="Okubo T."/>
            <person name="Ling V."/>
            <person name="Zhang W."/>
        </authorList>
    </citation>
    <scope>NUCLEOTIDE SEQUENCE [MRNA]</scope>
</reference>
<keyword id="KW-0106">Calcium</keyword>
<keyword id="KW-1015">Disulfide bond</keyword>
<keyword id="KW-0245">EGF-like domain</keyword>
<keyword id="KW-0256">Endoplasmic reticulum</keyword>
<keyword id="KW-0325">Glycoprotein</keyword>
<keyword id="KW-0413">Isomerase</keyword>
<keyword id="KW-0676">Redox-active center</keyword>
<keyword id="KW-0677">Repeat</keyword>
<keyword id="KW-0732">Signal</keyword>
<comment type="function">
    <text evidence="1 2">Protein disulfide isomerase (By similarity). Might play a role in the unfolded protein response (By similarity). May regulate transport of alpha4-beta2 neuronal acetylcholine receptor (By similarity).</text>
</comment>
<comment type="catalytic activity">
    <reaction evidence="2">
        <text>Catalyzes the rearrangement of -S-S- bonds in proteins.</text>
        <dbReference type="EC" id="5.3.4.1"/>
    </reaction>
</comment>
<comment type="subunit">
    <text evidence="1 2">Interacts with CHRNA4 (By similarity). Component of a complex containing at least CRELD2, MANF, MATN3 and PDIA4 (By similarity).</text>
</comment>
<comment type="subcellular location">
    <subcellularLocation>
        <location evidence="1">Endoplasmic reticulum</location>
    </subcellularLocation>
</comment>
<comment type="similarity">
    <text evidence="5">Belongs to the CRELD family.</text>
</comment>
<dbReference type="EC" id="5.3.4.1" evidence="2"/>
<dbReference type="EMBL" id="U48852">
    <property type="protein sequence ID" value="AAA91469.1"/>
    <property type="molecule type" value="mRNA"/>
</dbReference>
<dbReference type="RefSeq" id="NP_001231065.1">
    <property type="nucleotide sequence ID" value="NM_001244136.1"/>
</dbReference>
<dbReference type="GlyCosmos" id="Q60438">
    <property type="glycosylation" value="1 site, No reported glycans"/>
</dbReference>
<dbReference type="PaxDb" id="10029-NP_001231065.1"/>
<dbReference type="GeneID" id="100689097"/>
<dbReference type="KEGG" id="cge:100689097"/>
<dbReference type="CTD" id="79174"/>
<dbReference type="eggNOG" id="KOG4260">
    <property type="taxonomic scope" value="Eukaryota"/>
</dbReference>
<dbReference type="OrthoDB" id="19903at2759"/>
<dbReference type="Proteomes" id="UP000694386">
    <property type="component" value="Unplaced"/>
</dbReference>
<dbReference type="Proteomes" id="UP001108280">
    <property type="component" value="Chromosome 2"/>
</dbReference>
<dbReference type="GO" id="GO:0005783">
    <property type="term" value="C:endoplasmic reticulum"/>
    <property type="evidence" value="ECO:0007669"/>
    <property type="project" value="UniProtKB-SubCell"/>
</dbReference>
<dbReference type="GO" id="GO:0005509">
    <property type="term" value="F:calcium ion binding"/>
    <property type="evidence" value="ECO:0007669"/>
    <property type="project" value="InterPro"/>
</dbReference>
<dbReference type="GO" id="GO:0003756">
    <property type="term" value="F:protein disulfide isomerase activity"/>
    <property type="evidence" value="ECO:0007669"/>
    <property type="project" value="UniProtKB-EC"/>
</dbReference>
<dbReference type="CDD" id="cd00064">
    <property type="entry name" value="FU"/>
    <property type="match status" value="2"/>
</dbReference>
<dbReference type="FunFam" id="2.10.25.10:FF:000038">
    <property type="entry name" value="Fibrillin 2"/>
    <property type="match status" value="1"/>
</dbReference>
<dbReference type="Gene3D" id="2.10.25.10">
    <property type="entry name" value="Laminin"/>
    <property type="match status" value="1"/>
</dbReference>
<dbReference type="InterPro" id="IPR001881">
    <property type="entry name" value="EGF-like_Ca-bd_dom"/>
</dbReference>
<dbReference type="InterPro" id="IPR000742">
    <property type="entry name" value="EGF-like_dom"/>
</dbReference>
<dbReference type="InterPro" id="IPR000152">
    <property type="entry name" value="EGF-type_Asp/Asn_hydroxyl_site"/>
</dbReference>
<dbReference type="InterPro" id="IPR018097">
    <property type="entry name" value="EGF_Ca-bd_CS"/>
</dbReference>
<dbReference type="InterPro" id="IPR006212">
    <property type="entry name" value="Furin_repeat"/>
</dbReference>
<dbReference type="InterPro" id="IPR009030">
    <property type="entry name" value="Growth_fac_rcpt_cys_sf"/>
</dbReference>
<dbReference type="InterPro" id="IPR002049">
    <property type="entry name" value="LE_dom"/>
</dbReference>
<dbReference type="InterPro" id="IPR049883">
    <property type="entry name" value="NOTCH1_EGF-like"/>
</dbReference>
<dbReference type="PANTHER" id="PTHR24039:SF28">
    <property type="entry name" value="EGF-LIKE DOMAIN-CONTAINING PROTEIN"/>
    <property type="match status" value="1"/>
</dbReference>
<dbReference type="PANTHER" id="PTHR24039">
    <property type="entry name" value="FIBRILLIN-RELATED"/>
    <property type="match status" value="1"/>
</dbReference>
<dbReference type="Pfam" id="PF07645">
    <property type="entry name" value="EGF_CA"/>
    <property type="match status" value="1"/>
</dbReference>
<dbReference type="SMART" id="SM00181">
    <property type="entry name" value="EGF"/>
    <property type="match status" value="3"/>
</dbReference>
<dbReference type="SMART" id="SM00179">
    <property type="entry name" value="EGF_CA"/>
    <property type="match status" value="2"/>
</dbReference>
<dbReference type="SMART" id="SM00261">
    <property type="entry name" value="FU"/>
    <property type="match status" value="2"/>
</dbReference>
<dbReference type="SUPFAM" id="SSF57184">
    <property type="entry name" value="Growth factor receptor domain"/>
    <property type="match status" value="1"/>
</dbReference>
<dbReference type="PROSITE" id="PS00010">
    <property type="entry name" value="ASX_HYDROXYL"/>
    <property type="match status" value="1"/>
</dbReference>
<dbReference type="PROSITE" id="PS00022">
    <property type="entry name" value="EGF_1"/>
    <property type="match status" value="1"/>
</dbReference>
<dbReference type="PROSITE" id="PS01186">
    <property type="entry name" value="EGF_2"/>
    <property type="match status" value="2"/>
</dbReference>
<dbReference type="PROSITE" id="PS50026">
    <property type="entry name" value="EGF_3"/>
    <property type="match status" value="2"/>
</dbReference>
<dbReference type="PROSITE" id="PS01187">
    <property type="entry name" value="EGF_CA"/>
    <property type="match status" value="2"/>
</dbReference>
<gene>
    <name type="primary">CRELD2</name>
</gene>